<reference key="1">
    <citation type="submission" date="2002-11" db="EMBL/GenBank/DDBJ databases">
        <title>Synechococcus elongatus PCC7942 genome sequence, cosmid 7H1 and 2E8.</title>
        <authorList>
            <person name="Holtman C.K."/>
            <person name="Socias T."/>
            <person name="Mohler B.J."/>
            <person name="Chen Y."/>
            <person name="Min H."/>
            <person name="Golden S.S."/>
            <person name="Youderian P."/>
            <person name="Sandoval P."/>
            <person name="Gonzalez A."/>
            <person name="Salinas I."/>
        </authorList>
    </citation>
    <scope>NUCLEOTIDE SEQUENCE [GENOMIC DNA]</scope>
</reference>
<reference key="2">
    <citation type="submission" date="2005-08" db="EMBL/GenBank/DDBJ databases">
        <title>Complete sequence of chromosome 1 of Synechococcus elongatus PCC 7942.</title>
        <authorList>
            <consortium name="US DOE Joint Genome Institute"/>
            <person name="Copeland A."/>
            <person name="Lucas S."/>
            <person name="Lapidus A."/>
            <person name="Barry K."/>
            <person name="Detter J.C."/>
            <person name="Glavina T."/>
            <person name="Hammon N."/>
            <person name="Israni S."/>
            <person name="Pitluck S."/>
            <person name="Schmutz J."/>
            <person name="Larimer F."/>
            <person name="Land M."/>
            <person name="Kyrpides N."/>
            <person name="Lykidis A."/>
            <person name="Golden S."/>
            <person name="Richardson P."/>
        </authorList>
    </citation>
    <scope>NUCLEOTIDE SEQUENCE [LARGE SCALE GENOMIC DNA]</scope>
    <source>
        <strain>ATCC 33912 / PCC 7942 / FACHB-805</strain>
    </source>
</reference>
<dbReference type="EMBL" id="U30252">
    <property type="protein sequence ID" value="AAN71793.1"/>
    <property type="molecule type" value="Genomic_DNA"/>
</dbReference>
<dbReference type="EMBL" id="CP000100">
    <property type="protein sequence ID" value="ABB58501.1"/>
    <property type="molecule type" value="Genomic_DNA"/>
</dbReference>
<dbReference type="RefSeq" id="WP_011243943.1">
    <property type="nucleotide sequence ID" value="NZ_JACJTX010000001.1"/>
</dbReference>
<dbReference type="SMR" id="Q8GIR7"/>
<dbReference type="STRING" id="1140.Synpcc7942_2471"/>
<dbReference type="PaxDb" id="1140-Synpcc7942_2471"/>
<dbReference type="GeneID" id="72431364"/>
<dbReference type="KEGG" id="syf:Synpcc7942_2471"/>
<dbReference type="eggNOG" id="COG0781">
    <property type="taxonomic scope" value="Bacteria"/>
</dbReference>
<dbReference type="HOGENOM" id="CLU_087843_0_0_3"/>
<dbReference type="OrthoDB" id="3528057at2"/>
<dbReference type="BioCyc" id="SYNEL:SYNPCC7942_2471-MONOMER"/>
<dbReference type="Proteomes" id="UP000889800">
    <property type="component" value="Chromosome"/>
</dbReference>
<dbReference type="GO" id="GO:0005829">
    <property type="term" value="C:cytosol"/>
    <property type="evidence" value="ECO:0007669"/>
    <property type="project" value="TreeGrafter"/>
</dbReference>
<dbReference type="GO" id="GO:0003723">
    <property type="term" value="F:RNA binding"/>
    <property type="evidence" value="ECO:0007669"/>
    <property type="project" value="UniProtKB-UniRule"/>
</dbReference>
<dbReference type="GO" id="GO:0006353">
    <property type="term" value="P:DNA-templated transcription termination"/>
    <property type="evidence" value="ECO:0007669"/>
    <property type="project" value="UniProtKB-UniRule"/>
</dbReference>
<dbReference type="GO" id="GO:0031564">
    <property type="term" value="P:transcription antitermination"/>
    <property type="evidence" value="ECO:0007669"/>
    <property type="project" value="UniProtKB-KW"/>
</dbReference>
<dbReference type="Gene3D" id="1.10.940.10">
    <property type="entry name" value="NusB-like"/>
    <property type="match status" value="1"/>
</dbReference>
<dbReference type="HAMAP" id="MF_00073">
    <property type="entry name" value="NusB"/>
    <property type="match status" value="1"/>
</dbReference>
<dbReference type="InterPro" id="IPR035926">
    <property type="entry name" value="NusB-like_sf"/>
</dbReference>
<dbReference type="InterPro" id="IPR011605">
    <property type="entry name" value="NusB_fam"/>
</dbReference>
<dbReference type="InterPro" id="IPR006027">
    <property type="entry name" value="NusB_RsmB_TIM44"/>
</dbReference>
<dbReference type="NCBIfam" id="TIGR01951">
    <property type="entry name" value="nusB"/>
    <property type="match status" value="1"/>
</dbReference>
<dbReference type="PANTHER" id="PTHR11078:SF3">
    <property type="entry name" value="ANTITERMINATION NUSB DOMAIN-CONTAINING PROTEIN"/>
    <property type="match status" value="1"/>
</dbReference>
<dbReference type="PANTHER" id="PTHR11078">
    <property type="entry name" value="N UTILIZATION SUBSTANCE PROTEIN B-RELATED"/>
    <property type="match status" value="1"/>
</dbReference>
<dbReference type="Pfam" id="PF01029">
    <property type="entry name" value="NusB"/>
    <property type="match status" value="1"/>
</dbReference>
<dbReference type="SUPFAM" id="SSF48013">
    <property type="entry name" value="NusB-like"/>
    <property type="match status" value="1"/>
</dbReference>
<feature type="chain" id="PRO_0000176597" description="Transcription antitermination protein NusB">
    <location>
        <begin position="1"/>
        <end position="213"/>
    </location>
</feature>
<keyword id="KW-1185">Reference proteome</keyword>
<keyword id="KW-0694">RNA-binding</keyword>
<keyword id="KW-0804">Transcription</keyword>
<keyword id="KW-0889">Transcription antitermination</keyword>
<keyword id="KW-0805">Transcription regulation</keyword>
<organism>
    <name type="scientific">Synechococcus elongatus (strain ATCC 33912 / PCC 7942 / FACHB-805)</name>
    <name type="common">Anacystis nidulans R2</name>
    <dbReference type="NCBI Taxonomy" id="1140"/>
    <lineage>
        <taxon>Bacteria</taxon>
        <taxon>Bacillati</taxon>
        <taxon>Cyanobacteriota</taxon>
        <taxon>Cyanophyceae</taxon>
        <taxon>Synechococcales</taxon>
        <taxon>Synechococcaceae</taxon>
        <taxon>Synechococcus</taxon>
    </lineage>
</organism>
<name>NUSB_SYNE7</name>
<comment type="function">
    <text evidence="1">Involved in transcription antitermination. Required for transcription of ribosomal RNA (rRNA) genes. Binds specifically to the boxA antiterminator sequence of the ribosomal RNA (rrn) operons.</text>
</comment>
<comment type="similarity">
    <text evidence="1">Belongs to the NusB family.</text>
</comment>
<sequence length="213" mass="23743">MQPRRIARELALLSLSQLPAKAEPPSDQMLSELLLAATRTLAAEARDHLEAASAELKQSSDRLLLSTLGSADLESSRAMLQEVIEMAQAAINRTGNALDLPEWVQLTDREEVRKFGGRLVLQVSNNRERIDRTLNDVMVDWQLHRVPRLDQDILRLAAAEILFLGTPEQVAINEAVELANRYSDEEGRRFINGVLRRLSTMLGKAARAARPSS</sequence>
<evidence type="ECO:0000255" key="1">
    <source>
        <dbReference type="HAMAP-Rule" id="MF_00073"/>
    </source>
</evidence>
<proteinExistence type="inferred from homology"/>
<accession>Q8GIR7</accession>
<accession>Q31KB8</accession>
<protein>
    <recommendedName>
        <fullName evidence="1">Transcription antitermination protein NusB</fullName>
    </recommendedName>
    <alternativeName>
        <fullName evidence="1">Antitermination factor NusB</fullName>
    </alternativeName>
</protein>
<gene>
    <name evidence="1" type="primary">nusB</name>
    <name type="ordered locus">Synpcc7942_2471</name>
    <name type="ORF">seb0055</name>
</gene>